<accession>Q0KCE4</accession>
<organism>
    <name type="scientific">Cupriavidus necator (strain ATCC 17699 / DSM 428 / KCTC 22496 / NCIMB 10442 / H16 / Stanier 337)</name>
    <name type="common">Ralstonia eutropha</name>
    <dbReference type="NCBI Taxonomy" id="381666"/>
    <lineage>
        <taxon>Bacteria</taxon>
        <taxon>Pseudomonadati</taxon>
        <taxon>Pseudomonadota</taxon>
        <taxon>Betaproteobacteria</taxon>
        <taxon>Burkholderiales</taxon>
        <taxon>Burkholderiaceae</taxon>
        <taxon>Cupriavidus</taxon>
    </lineage>
</organism>
<dbReference type="EC" id="2.5.1.55" evidence="1"/>
<dbReference type="EMBL" id="AM260479">
    <property type="protein sequence ID" value="CAJ92327.1"/>
    <property type="molecule type" value="Genomic_DNA"/>
</dbReference>
<dbReference type="RefSeq" id="WP_011614920.1">
    <property type="nucleotide sequence ID" value="NC_008313.1"/>
</dbReference>
<dbReference type="SMR" id="Q0KCE4"/>
<dbReference type="STRING" id="381666.H16_A1186"/>
<dbReference type="KEGG" id="reh:H16_A1186"/>
<dbReference type="PATRIC" id="fig|381666.6.peg.1574"/>
<dbReference type="eggNOG" id="COG2877">
    <property type="taxonomic scope" value="Bacteria"/>
</dbReference>
<dbReference type="HOGENOM" id="CLU_036666_0_0_4"/>
<dbReference type="OrthoDB" id="9776934at2"/>
<dbReference type="UniPathway" id="UPA00030"/>
<dbReference type="UniPathway" id="UPA00357">
    <property type="reaction ID" value="UER00474"/>
</dbReference>
<dbReference type="Proteomes" id="UP000008210">
    <property type="component" value="Chromosome 1"/>
</dbReference>
<dbReference type="GO" id="GO:0005737">
    <property type="term" value="C:cytoplasm"/>
    <property type="evidence" value="ECO:0007669"/>
    <property type="project" value="UniProtKB-SubCell"/>
</dbReference>
<dbReference type="GO" id="GO:0008676">
    <property type="term" value="F:3-deoxy-8-phosphooctulonate synthase activity"/>
    <property type="evidence" value="ECO:0007669"/>
    <property type="project" value="UniProtKB-UniRule"/>
</dbReference>
<dbReference type="GO" id="GO:0019294">
    <property type="term" value="P:keto-3-deoxy-D-manno-octulosonic acid biosynthetic process"/>
    <property type="evidence" value="ECO:0007669"/>
    <property type="project" value="UniProtKB-UniRule"/>
</dbReference>
<dbReference type="Gene3D" id="3.20.20.70">
    <property type="entry name" value="Aldolase class I"/>
    <property type="match status" value="1"/>
</dbReference>
<dbReference type="HAMAP" id="MF_00056">
    <property type="entry name" value="KDO8P_synth"/>
    <property type="match status" value="1"/>
</dbReference>
<dbReference type="InterPro" id="IPR013785">
    <property type="entry name" value="Aldolase_TIM"/>
</dbReference>
<dbReference type="InterPro" id="IPR006218">
    <property type="entry name" value="DAHP1/KDSA"/>
</dbReference>
<dbReference type="InterPro" id="IPR006269">
    <property type="entry name" value="KDO8P_synthase"/>
</dbReference>
<dbReference type="NCBIfam" id="TIGR01362">
    <property type="entry name" value="KDO8P_synth"/>
    <property type="match status" value="1"/>
</dbReference>
<dbReference type="NCBIfam" id="NF003543">
    <property type="entry name" value="PRK05198.1"/>
    <property type="match status" value="1"/>
</dbReference>
<dbReference type="PANTHER" id="PTHR21057">
    <property type="entry name" value="PHOSPHO-2-DEHYDRO-3-DEOXYHEPTONATE ALDOLASE"/>
    <property type="match status" value="1"/>
</dbReference>
<dbReference type="Pfam" id="PF00793">
    <property type="entry name" value="DAHP_synth_1"/>
    <property type="match status" value="1"/>
</dbReference>
<dbReference type="SUPFAM" id="SSF51569">
    <property type="entry name" value="Aldolase"/>
    <property type="match status" value="1"/>
</dbReference>
<evidence type="ECO:0000255" key="1">
    <source>
        <dbReference type="HAMAP-Rule" id="MF_00056"/>
    </source>
</evidence>
<comment type="catalytic activity">
    <reaction evidence="1">
        <text>D-arabinose 5-phosphate + phosphoenolpyruvate + H2O = 3-deoxy-alpha-D-manno-2-octulosonate-8-phosphate + phosphate</text>
        <dbReference type="Rhea" id="RHEA:14053"/>
        <dbReference type="ChEBI" id="CHEBI:15377"/>
        <dbReference type="ChEBI" id="CHEBI:43474"/>
        <dbReference type="ChEBI" id="CHEBI:57693"/>
        <dbReference type="ChEBI" id="CHEBI:58702"/>
        <dbReference type="ChEBI" id="CHEBI:85985"/>
        <dbReference type="EC" id="2.5.1.55"/>
    </reaction>
</comment>
<comment type="pathway">
    <text evidence="1">Carbohydrate biosynthesis; 3-deoxy-D-manno-octulosonate biosynthesis; 3-deoxy-D-manno-octulosonate from D-ribulose 5-phosphate: step 2/3.</text>
</comment>
<comment type="pathway">
    <text evidence="1">Bacterial outer membrane biogenesis; lipopolysaccharide biosynthesis.</text>
</comment>
<comment type="subcellular location">
    <subcellularLocation>
        <location evidence="1">Cytoplasm</location>
    </subcellularLocation>
</comment>
<comment type="similarity">
    <text evidence="1">Belongs to the KdsA family.</text>
</comment>
<proteinExistence type="inferred from homology"/>
<feature type="chain" id="PRO_0000304477" description="2-dehydro-3-deoxyphosphooctonate aldolase">
    <location>
        <begin position="1"/>
        <end position="289"/>
    </location>
</feature>
<sequence length="289" mass="30987">MKLCGFEAGLDKPFFLIAGPCVIESEQMALDTAGELKAITAELGIPFIYKSSFDKANRSSGKSFRGLGMEKGLEILATVKREIGVPVLTDIHEIDEIKPVAAVVDVLQTPAFLCRQTDFIRACAQSGKPVNIKKGQFLAPHDMKNVIDKARDAAREAGLPDDVFMACERGVSFGYNNLVSDMRSLAIMRETGAPVVFDATHSVQLPGGQGTSSGGQREFVPVLSRAAVATGVAGLFMETHPDPSKAMSDGPNAVPLSRMKELLAVLKELDTLVKRAGFLEDNFGWPACA</sequence>
<name>KDSA_CUPNH</name>
<gene>
    <name evidence="1" type="primary">kdsA</name>
    <name type="ordered locus">H16_A1186</name>
</gene>
<protein>
    <recommendedName>
        <fullName evidence="1">2-dehydro-3-deoxyphosphooctonate aldolase</fullName>
        <ecNumber evidence="1">2.5.1.55</ecNumber>
    </recommendedName>
    <alternativeName>
        <fullName evidence="1">3-deoxy-D-manno-octulosonic acid 8-phosphate synthase</fullName>
    </alternativeName>
    <alternativeName>
        <fullName evidence="1">KDO-8-phosphate synthase</fullName>
        <shortName evidence="1">KDO 8-P synthase</shortName>
        <shortName evidence="1">KDOPS</shortName>
    </alternativeName>
    <alternativeName>
        <fullName evidence="1">Phospho-2-dehydro-3-deoxyoctonate aldolase</fullName>
    </alternativeName>
</protein>
<keyword id="KW-0963">Cytoplasm</keyword>
<keyword id="KW-0448">Lipopolysaccharide biosynthesis</keyword>
<keyword id="KW-1185">Reference proteome</keyword>
<keyword id="KW-0808">Transferase</keyword>
<reference key="1">
    <citation type="journal article" date="2006" name="Nat. Biotechnol.">
        <title>Genome sequence of the bioplastic-producing 'Knallgas' bacterium Ralstonia eutropha H16.</title>
        <authorList>
            <person name="Pohlmann A."/>
            <person name="Fricke W.F."/>
            <person name="Reinecke F."/>
            <person name="Kusian B."/>
            <person name="Liesegang H."/>
            <person name="Cramm R."/>
            <person name="Eitinger T."/>
            <person name="Ewering C."/>
            <person name="Poetter M."/>
            <person name="Schwartz E."/>
            <person name="Strittmatter A."/>
            <person name="Voss I."/>
            <person name="Gottschalk G."/>
            <person name="Steinbuechel A."/>
            <person name="Friedrich B."/>
            <person name="Bowien B."/>
        </authorList>
    </citation>
    <scope>NUCLEOTIDE SEQUENCE [LARGE SCALE GENOMIC DNA]</scope>
    <source>
        <strain>ATCC 17699 / DSM 428 / KCTC 22496 / NCIMB 10442 / H16 / Stanier 337</strain>
    </source>
</reference>